<keyword id="KW-0315">Glutamine amidotransferase</keyword>
<keyword id="KW-0378">Hydrolase</keyword>
<keyword id="KW-0456">Lyase</keyword>
<keyword id="KW-0663">Pyridoxal phosphate</keyword>
<dbReference type="EC" id="4.3.3.6" evidence="1"/>
<dbReference type="EC" id="3.5.1.2" evidence="1"/>
<dbReference type="EMBL" id="CP000437">
    <property type="protein sequence ID" value="ABI83301.1"/>
    <property type="status" value="ALT_INIT"/>
    <property type="molecule type" value="Genomic_DNA"/>
</dbReference>
<dbReference type="RefSeq" id="WP_003016897.1">
    <property type="nucleotide sequence ID" value="NC_017463.1"/>
</dbReference>
<dbReference type="SMR" id="Q0BKT3"/>
<dbReference type="MEROPS" id="C26.A32"/>
<dbReference type="KEGG" id="fth:FTH_1495"/>
<dbReference type="UniPathway" id="UPA00245"/>
<dbReference type="GO" id="GO:0005829">
    <property type="term" value="C:cytosol"/>
    <property type="evidence" value="ECO:0007669"/>
    <property type="project" value="TreeGrafter"/>
</dbReference>
<dbReference type="GO" id="GO:1903600">
    <property type="term" value="C:glutaminase complex"/>
    <property type="evidence" value="ECO:0007669"/>
    <property type="project" value="TreeGrafter"/>
</dbReference>
<dbReference type="GO" id="GO:0004359">
    <property type="term" value="F:glutaminase activity"/>
    <property type="evidence" value="ECO:0007669"/>
    <property type="project" value="UniProtKB-UniRule"/>
</dbReference>
<dbReference type="GO" id="GO:0036381">
    <property type="term" value="F:pyridoxal 5'-phosphate synthase (glutamine hydrolysing) activity"/>
    <property type="evidence" value="ECO:0007669"/>
    <property type="project" value="UniProtKB-UniRule"/>
</dbReference>
<dbReference type="GO" id="GO:0006543">
    <property type="term" value="P:glutamine catabolic process"/>
    <property type="evidence" value="ECO:0007669"/>
    <property type="project" value="UniProtKB-UniRule"/>
</dbReference>
<dbReference type="GO" id="GO:0042823">
    <property type="term" value="P:pyridoxal phosphate biosynthetic process"/>
    <property type="evidence" value="ECO:0007669"/>
    <property type="project" value="UniProtKB-UniRule"/>
</dbReference>
<dbReference type="GO" id="GO:0008614">
    <property type="term" value="P:pyridoxine metabolic process"/>
    <property type="evidence" value="ECO:0007669"/>
    <property type="project" value="TreeGrafter"/>
</dbReference>
<dbReference type="CDD" id="cd01749">
    <property type="entry name" value="GATase1_PB"/>
    <property type="match status" value="1"/>
</dbReference>
<dbReference type="Gene3D" id="3.40.50.880">
    <property type="match status" value="1"/>
</dbReference>
<dbReference type="HAMAP" id="MF_01615">
    <property type="entry name" value="PdxT"/>
    <property type="match status" value="1"/>
</dbReference>
<dbReference type="InterPro" id="IPR029062">
    <property type="entry name" value="Class_I_gatase-like"/>
</dbReference>
<dbReference type="InterPro" id="IPR002161">
    <property type="entry name" value="PdxT/SNO"/>
</dbReference>
<dbReference type="InterPro" id="IPR021196">
    <property type="entry name" value="PdxT/SNO_CS"/>
</dbReference>
<dbReference type="NCBIfam" id="TIGR03800">
    <property type="entry name" value="PLP_synth_Pdx2"/>
    <property type="match status" value="1"/>
</dbReference>
<dbReference type="NCBIfam" id="NF010050">
    <property type="entry name" value="PRK13526.1"/>
    <property type="match status" value="1"/>
</dbReference>
<dbReference type="PANTHER" id="PTHR31559">
    <property type="entry name" value="PYRIDOXAL 5'-PHOSPHATE SYNTHASE SUBUNIT SNO"/>
    <property type="match status" value="1"/>
</dbReference>
<dbReference type="PANTHER" id="PTHR31559:SF0">
    <property type="entry name" value="PYRIDOXAL 5'-PHOSPHATE SYNTHASE SUBUNIT SNO1-RELATED"/>
    <property type="match status" value="1"/>
</dbReference>
<dbReference type="Pfam" id="PF01174">
    <property type="entry name" value="SNO"/>
    <property type="match status" value="1"/>
</dbReference>
<dbReference type="PIRSF" id="PIRSF005639">
    <property type="entry name" value="Glut_amidoT_SNO"/>
    <property type="match status" value="1"/>
</dbReference>
<dbReference type="SUPFAM" id="SSF52317">
    <property type="entry name" value="Class I glutamine amidotransferase-like"/>
    <property type="match status" value="1"/>
</dbReference>
<dbReference type="PROSITE" id="PS01236">
    <property type="entry name" value="PDXT_SNO_1"/>
    <property type="match status" value="1"/>
</dbReference>
<dbReference type="PROSITE" id="PS51130">
    <property type="entry name" value="PDXT_SNO_2"/>
    <property type="match status" value="1"/>
</dbReference>
<protein>
    <recommendedName>
        <fullName evidence="1">Pyridoxal 5'-phosphate synthase subunit PdxT</fullName>
        <ecNumber evidence="1">4.3.3.6</ecNumber>
    </recommendedName>
    <alternativeName>
        <fullName evidence="1">Pdx2</fullName>
    </alternativeName>
    <alternativeName>
        <fullName evidence="1">Pyridoxal 5'-phosphate synthase glutaminase subunit</fullName>
        <ecNumber evidence="1">3.5.1.2</ecNumber>
    </alternativeName>
</protein>
<feature type="chain" id="PRO_0000292997" description="Pyridoxal 5'-phosphate synthase subunit PdxT">
    <location>
        <begin position="1"/>
        <end position="179"/>
    </location>
</feature>
<feature type="active site" description="Nucleophile" evidence="1">
    <location>
        <position position="79"/>
    </location>
</feature>
<feature type="active site" description="Charge relay system" evidence="1">
    <location>
        <position position="163"/>
    </location>
</feature>
<feature type="active site" description="Charge relay system" evidence="1">
    <location>
        <position position="165"/>
    </location>
</feature>
<feature type="binding site" evidence="1">
    <location>
        <begin position="48"/>
        <end position="50"/>
    </location>
    <ligand>
        <name>L-glutamine</name>
        <dbReference type="ChEBI" id="CHEBI:58359"/>
    </ligand>
</feature>
<feature type="binding site" evidence="1">
    <location>
        <position position="101"/>
    </location>
    <ligand>
        <name>L-glutamine</name>
        <dbReference type="ChEBI" id="CHEBI:58359"/>
    </ligand>
</feature>
<feature type="binding site" evidence="1">
    <location>
        <begin position="127"/>
        <end position="128"/>
    </location>
    <ligand>
        <name>L-glutamine</name>
        <dbReference type="ChEBI" id="CHEBI:58359"/>
    </ligand>
</feature>
<accession>Q0BKT3</accession>
<comment type="function">
    <text evidence="1">Catalyzes the hydrolysis of glutamine to glutamate and ammonia as part of the biosynthesis of pyridoxal 5'-phosphate. The resulting ammonia molecule is channeled to the active site of PdxS.</text>
</comment>
<comment type="catalytic activity">
    <reaction evidence="1">
        <text>aldehydo-D-ribose 5-phosphate + D-glyceraldehyde 3-phosphate + L-glutamine = pyridoxal 5'-phosphate + L-glutamate + phosphate + 3 H2O + H(+)</text>
        <dbReference type="Rhea" id="RHEA:31507"/>
        <dbReference type="ChEBI" id="CHEBI:15377"/>
        <dbReference type="ChEBI" id="CHEBI:15378"/>
        <dbReference type="ChEBI" id="CHEBI:29985"/>
        <dbReference type="ChEBI" id="CHEBI:43474"/>
        <dbReference type="ChEBI" id="CHEBI:58273"/>
        <dbReference type="ChEBI" id="CHEBI:58359"/>
        <dbReference type="ChEBI" id="CHEBI:59776"/>
        <dbReference type="ChEBI" id="CHEBI:597326"/>
        <dbReference type="EC" id="4.3.3.6"/>
    </reaction>
</comment>
<comment type="catalytic activity">
    <reaction evidence="1">
        <text>L-glutamine + H2O = L-glutamate + NH4(+)</text>
        <dbReference type="Rhea" id="RHEA:15889"/>
        <dbReference type="ChEBI" id="CHEBI:15377"/>
        <dbReference type="ChEBI" id="CHEBI:28938"/>
        <dbReference type="ChEBI" id="CHEBI:29985"/>
        <dbReference type="ChEBI" id="CHEBI:58359"/>
        <dbReference type="EC" id="3.5.1.2"/>
    </reaction>
</comment>
<comment type="pathway">
    <text evidence="1">Cofactor biosynthesis; pyridoxal 5'-phosphate biosynthesis.</text>
</comment>
<comment type="subunit">
    <text evidence="1">In the presence of PdxS, forms a dodecamer of heterodimers. Only shows activity in the heterodimer.</text>
</comment>
<comment type="similarity">
    <text evidence="1">Belongs to the glutaminase PdxT/SNO family.</text>
</comment>
<comment type="sequence caution" evidence="2">
    <conflict type="erroneous initiation">
        <sequence resource="EMBL-CDS" id="ABI83301"/>
    </conflict>
</comment>
<evidence type="ECO:0000255" key="1">
    <source>
        <dbReference type="HAMAP-Rule" id="MF_01615"/>
    </source>
</evidence>
<evidence type="ECO:0000305" key="2"/>
<organism>
    <name type="scientific">Francisella tularensis subsp. holarctica (strain OSU18)</name>
    <dbReference type="NCBI Taxonomy" id="393011"/>
    <lineage>
        <taxon>Bacteria</taxon>
        <taxon>Pseudomonadati</taxon>
        <taxon>Pseudomonadota</taxon>
        <taxon>Gammaproteobacteria</taxon>
        <taxon>Thiotrichales</taxon>
        <taxon>Francisellaceae</taxon>
        <taxon>Francisella</taxon>
    </lineage>
</organism>
<gene>
    <name evidence="1" type="primary">pdxT</name>
    <name type="ordered locus">FTH_1495</name>
</gene>
<name>PDXT_FRATO</name>
<reference key="1">
    <citation type="journal article" date="2006" name="J. Bacteriol.">
        <title>Chromosome rearrangement and diversification of Francisella tularensis revealed by the type B (OSU18) genome sequence.</title>
        <authorList>
            <person name="Petrosino J.F."/>
            <person name="Xiang Q."/>
            <person name="Karpathy S.E."/>
            <person name="Jiang H."/>
            <person name="Yerrapragada S."/>
            <person name="Liu Y."/>
            <person name="Gioia J."/>
            <person name="Hemphill L."/>
            <person name="Gonzalez A."/>
            <person name="Raghavan T.M."/>
            <person name="Uzman A."/>
            <person name="Fox G.E."/>
            <person name="Highlander S."/>
            <person name="Reichard M."/>
            <person name="Morton R.J."/>
            <person name="Clinkenbeard K.D."/>
            <person name="Weinstock G.M."/>
        </authorList>
    </citation>
    <scope>NUCLEOTIDE SEQUENCE [LARGE SCALE GENOMIC DNA]</scope>
    <source>
        <strain>OSU18</strain>
    </source>
</reference>
<proteinExistence type="inferred from homology"/>
<sequence>MTQKVGVLAIQGGYQKHADMFKSLGVEVKLVKFNNDFDSIDRLVIPGGESTTLLNLLNKHQIFDKLYNFCSSKPVFGTCAGSIILSKGEGYLNLLDLEVQRNAYGRQVDSFVADISFNDKNITGVFIRAPKFIVVGNQVDILSKYQNSPVLLRQANILVSSFHPELTQDPTVHEYFLAM</sequence>